<organism>
    <name type="scientific">Mus musculus</name>
    <name type="common">Mouse</name>
    <dbReference type="NCBI Taxonomy" id="10090"/>
    <lineage>
        <taxon>Eukaryota</taxon>
        <taxon>Metazoa</taxon>
        <taxon>Chordata</taxon>
        <taxon>Craniata</taxon>
        <taxon>Vertebrata</taxon>
        <taxon>Euteleostomi</taxon>
        <taxon>Mammalia</taxon>
        <taxon>Eutheria</taxon>
        <taxon>Euarchontoglires</taxon>
        <taxon>Glires</taxon>
        <taxon>Rodentia</taxon>
        <taxon>Myomorpha</taxon>
        <taxon>Muroidea</taxon>
        <taxon>Muridae</taxon>
        <taxon>Murinae</taxon>
        <taxon>Mus</taxon>
        <taxon>Mus</taxon>
    </lineage>
</organism>
<keyword id="KW-1185">Reference proteome</keyword>
<sequence>MRTEAEAAGQPLEPGDFVQLPVPIIQQLYHWDCGLACSRMVLRYLGQLDDGEFENALQELQLTRSIWTIDLAYLMRHFGVRHRFCTQTLGVDKGYKNQSFYRKHFDTEETRVNQLFAQAKACKVQVEKCTVSVQDIQVHLAQGHVAIVLVNSGVLHCDLCSSPVKYCCFTPSGHRCFCRTPDYQGHFIVLRGYNRATGCIFYNNPAYADRMCSTSISNFEEARTSYGTDEDILFVYLDS</sequence>
<feature type="chain" id="PRO_0000079575" description="Protein GUCD1">
    <location>
        <begin position="1"/>
        <end position="239"/>
    </location>
</feature>
<feature type="sequence conflict" description="In Ref. 1; BAE34080." evidence="1" ref="1">
    <original>C</original>
    <variation>Y</variation>
    <location>
        <position position="157"/>
    </location>
</feature>
<protein>
    <recommendedName>
        <fullName>Protein GUCD1</fullName>
    </recommendedName>
    <alternativeName>
        <fullName>Guanylyl cyclase domain-containing protein 1</fullName>
    </alternativeName>
    <alternativeName>
        <fullName>Protein LLN4</fullName>
    </alternativeName>
</protein>
<dbReference type="EMBL" id="AK034509">
    <property type="protein sequence ID" value="BAC28736.1"/>
    <property type="status" value="ALT_INIT"/>
    <property type="molecule type" value="mRNA"/>
</dbReference>
<dbReference type="EMBL" id="AK040832">
    <property type="protein sequence ID" value="BAC30713.1"/>
    <property type="status" value="ALT_TERM"/>
    <property type="molecule type" value="mRNA"/>
</dbReference>
<dbReference type="EMBL" id="AK157404">
    <property type="protein sequence ID" value="BAE34080.1"/>
    <property type="molecule type" value="mRNA"/>
</dbReference>
<dbReference type="EMBL" id="BC043463">
    <property type="protein sequence ID" value="AAH43463.2"/>
    <property type="molecule type" value="mRNA"/>
</dbReference>
<dbReference type="EMBL" id="BC118613">
    <property type="protein sequence ID" value="AAI18614.1"/>
    <property type="molecule type" value="mRNA"/>
</dbReference>
<dbReference type="EMBL" id="BC119795">
    <property type="protein sequence ID" value="AAI19796.1"/>
    <property type="molecule type" value="mRNA"/>
</dbReference>
<dbReference type="CCDS" id="CCDS35936.1"/>
<dbReference type="RefSeq" id="NP_001334130.1">
    <property type="nucleotide sequence ID" value="NM_001347201.1"/>
</dbReference>
<dbReference type="RefSeq" id="NP_780342.1">
    <property type="nucleotide sequence ID" value="NM_175133.2"/>
</dbReference>
<dbReference type="FunCoup" id="Q8BZI6">
    <property type="interactions" value="31"/>
</dbReference>
<dbReference type="STRING" id="10090.ENSMUSP00000043000"/>
<dbReference type="iPTMnet" id="Q8BZI6"/>
<dbReference type="PhosphoSitePlus" id="Q8BZI6"/>
<dbReference type="SwissPalm" id="Q8BZI6"/>
<dbReference type="PaxDb" id="10090-ENSMUSP00000043000"/>
<dbReference type="Antibodypedia" id="9753">
    <property type="antibodies" value="81 antibodies from 13 providers"/>
</dbReference>
<dbReference type="Ensembl" id="ENSMUST00000039796.14">
    <property type="protein sequence ID" value="ENSMUSP00000043000.8"/>
    <property type="gene ID" value="ENSMUSG00000033416.16"/>
</dbReference>
<dbReference type="GeneID" id="68778"/>
<dbReference type="KEGG" id="mmu:68778"/>
<dbReference type="UCSC" id="uc007fqk.1">
    <property type="organism name" value="mouse"/>
</dbReference>
<dbReference type="AGR" id="MGI:1916028"/>
<dbReference type="CTD" id="83606"/>
<dbReference type="MGI" id="MGI:1916028">
    <property type="gene designation" value="Gucd1"/>
</dbReference>
<dbReference type="VEuPathDB" id="HostDB:ENSMUSG00000033416"/>
<dbReference type="eggNOG" id="KOG4621">
    <property type="taxonomic scope" value="Eukaryota"/>
</dbReference>
<dbReference type="GeneTree" id="ENSGT00390000000571"/>
<dbReference type="HOGENOM" id="CLU_064395_0_1_1"/>
<dbReference type="InParanoid" id="Q8BZI6"/>
<dbReference type="OMA" id="VQDIQKH"/>
<dbReference type="OrthoDB" id="206796at2759"/>
<dbReference type="PhylomeDB" id="Q8BZI6"/>
<dbReference type="TreeFam" id="TF324062"/>
<dbReference type="BioGRID-ORCS" id="68778">
    <property type="hits" value="3 hits in 77 CRISPR screens"/>
</dbReference>
<dbReference type="ChiTaRS" id="Gucd1">
    <property type="organism name" value="mouse"/>
</dbReference>
<dbReference type="PRO" id="PR:Q8BZI6"/>
<dbReference type="Proteomes" id="UP000000589">
    <property type="component" value="Chromosome 10"/>
</dbReference>
<dbReference type="RNAct" id="Q8BZI6">
    <property type="molecule type" value="protein"/>
</dbReference>
<dbReference type="Bgee" id="ENSMUSG00000033416">
    <property type="expression patterns" value="Expressed in metanephric proximal tubule and 259 other cell types or tissues"/>
</dbReference>
<dbReference type="ExpressionAtlas" id="Q8BZI6">
    <property type="expression patterns" value="baseline and differential"/>
</dbReference>
<dbReference type="Gene3D" id="3.90.70.10">
    <property type="entry name" value="Cysteine proteinases"/>
    <property type="match status" value="1"/>
</dbReference>
<dbReference type="InterPro" id="IPR018616">
    <property type="entry name" value="GUCD1"/>
</dbReference>
<dbReference type="PANTHER" id="PTHR31400">
    <property type="entry name" value="GUANYLYL CYCLASE DOMAIN CONTAINING PROTEIN 1 GUCD1"/>
    <property type="match status" value="1"/>
</dbReference>
<dbReference type="PANTHER" id="PTHR31400:SF1">
    <property type="entry name" value="PROTEIN GUCD1"/>
    <property type="match status" value="1"/>
</dbReference>
<dbReference type="Pfam" id="PF09778">
    <property type="entry name" value="Guanylate_cyc_2"/>
    <property type="match status" value="1"/>
</dbReference>
<accession>Q8BZI6</accession>
<accession>Q147V8</accession>
<accession>Q3TZX7</accession>
<accession>Q80XN8</accession>
<accession>Q8BLZ0</accession>
<name>GUCD1_MOUSE</name>
<comment type="sequence caution" evidence="1">
    <conflict type="erroneous initiation">
        <sequence resource="EMBL-CDS" id="BAC28736"/>
    </conflict>
    <text>Extended N-terminus.</text>
</comment>
<proteinExistence type="evidence at transcript level"/>
<reference key="1">
    <citation type="journal article" date="2005" name="Science">
        <title>The transcriptional landscape of the mammalian genome.</title>
        <authorList>
            <person name="Carninci P."/>
            <person name="Kasukawa T."/>
            <person name="Katayama S."/>
            <person name="Gough J."/>
            <person name="Frith M.C."/>
            <person name="Maeda N."/>
            <person name="Oyama R."/>
            <person name="Ravasi T."/>
            <person name="Lenhard B."/>
            <person name="Wells C."/>
            <person name="Kodzius R."/>
            <person name="Shimokawa K."/>
            <person name="Bajic V.B."/>
            <person name="Brenner S.E."/>
            <person name="Batalov S."/>
            <person name="Forrest A.R."/>
            <person name="Zavolan M."/>
            <person name="Davis M.J."/>
            <person name="Wilming L.G."/>
            <person name="Aidinis V."/>
            <person name="Allen J.E."/>
            <person name="Ambesi-Impiombato A."/>
            <person name="Apweiler R."/>
            <person name="Aturaliya R.N."/>
            <person name="Bailey T.L."/>
            <person name="Bansal M."/>
            <person name="Baxter L."/>
            <person name="Beisel K.W."/>
            <person name="Bersano T."/>
            <person name="Bono H."/>
            <person name="Chalk A.M."/>
            <person name="Chiu K.P."/>
            <person name="Choudhary V."/>
            <person name="Christoffels A."/>
            <person name="Clutterbuck D.R."/>
            <person name="Crowe M.L."/>
            <person name="Dalla E."/>
            <person name="Dalrymple B.P."/>
            <person name="de Bono B."/>
            <person name="Della Gatta G."/>
            <person name="di Bernardo D."/>
            <person name="Down T."/>
            <person name="Engstrom P."/>
            <person name="Fagiolini M."/>
            <person name="Faulkner G."/>
            <person name="Fletcher C.F."/>
            <person name="Fukushima T."/>
            <person name="Furuno M."/>
            <person name="Futaki S."/>
            <person name="Gariboldi M."/>
            <person name="Georgii-Hemming P."/>
            <person name="Gingeras T.R."/>
            <person name="Gojobori T."/>
            <person name="Green R.E."/>
            <person name="Gustincich S."/>
            <person name="Harbers M."/>
            <person name="Hayashi Y."/>
            <person name="Hensch T.K."/>
            <person name="Hirokawa N."/>
            <person name="Hill D."/>
            <person name="Huminiecki L."/>
            <person name="Iacono M."/>
            <person name="Ikeo K."/>
            <person name="Iwama A."/>
            <person name="Ishikawa T."/>
            <person name="Jakt M."/>
            <person name="Kanapin A."/>
            <person name="Katoh M."/>
            <person name="Kawasawa Y."/>
            <person name="Kelso J."/>
            <person name="Kitamura H."/>
            <person name="Kitano H."/>
            <person name="Kollias G."/>
            <person name="Krishnan S.P."/>
            <person name="Kruger A."/>
            <person name="Kummerfeld S.K."/>
            <person name="Kurochkin I.V."/>
            <person name="Lareau L.F."/>
            <person name="Lazarevic D."/>
            <person name="Lipovich L."/>
            <person name="Liu J."/>
            <person name="Liuni S."/>
            <person name="McWilliam S."/>
            <person name="Madan Babu M."/>
            <person name="Madera M."/>
            <person name="Marchionni L."/>
            <person name="Matsuda H."/>
            <person name="Matsuzawa S."/>
            <person name="Miki H."/>
            <person name="Mignone F."/>
            <person name="Miyake S."/>
            <person name="Morris K."/>
            <person name="Mottagui-Tabar S."/>
            <person name="Mulder N."/>
            <person name="Nakano N."/>
            <person name="Nakauchi H."/>
            <person name="Ng P."/>
            <person name="Nilsson R."/>
            <person name="Nishiguchi S."/>
            <person name="Nishikawa S."/>
            <person name="Nori F."/>
            <person name="Ohara O."/>
            <person name="Okazaki Y."/>
            <person name="Orlando V."/>
            <person name="Pang K.C."/>
            <person name="Pavan W.J."/>
            <person name="Pavesi G."/>
            <person name="Pesole G."/>
            <person name="Petrovsky N."/>
            <person name="Piazza S."/>
            <person name="Reed J."/>
            <person name="Reid J.F."/>
            <person name="Ring B.Z."/>
            <person name="Ringwald M."/>
            <person name="Rost B."/>
            <person name="Ruan Y."/>
            <person name="Salzberg S.L."/>
            <person name="Sandelin A."/>
            <person name="Schneider C."/>
            <person name="Schoenbach C."/>
            <person name="Sekiguchi K."/>
            <person name="Semple C.A."/>
            <person name="Seno S."/>
            <person name="Sessa L."/>
            <person name="Sheng Y."/>
            <person name="Shibata Y."/>
            <person name="Shimada H."/>
            <person name="Shimada K."/>
            <person name="Silva D."/>
            <person name="Sinclair B."/>
            <person name="Sperling S."/>
            <person name="Stupka E."/>
            <person name="Sugiura K."/>
            <person name="Sultana R."/>
            <person name="Takenaka Y."/>
            <person name="Taki K."/>
            <person name="Tammoja K."/>
            <person name="Tan S.L."/>
            <person name="Tang S."/>
            <person name="Taylor M.S."/>
            <person name="Tegner J."/>
            <person name="Teichmann S.A."/>
            <person name="Ueda H.R."/>
            <person name="van Nimwegen E."/>
            <person name="Verardo R."/>
            <person name="Wei C.L."/>
            <person name="Yagi K."/>
            <person name="Yamanishi H."/>
            <person name="Zabarovsky E."/>
            <person name="Zhu S."/>
            <person name="Zimmer A."/>
            <person name="Hide W."/>
            <person name="Bult C."/>
            <person name="Grimmond S.M."/>
            <person name="Teasdale R.D."/>
            <person name="Liu E.T."/>
            <person name="Brusic V."/>
            <person name="Quackenbush J."/>
            <person name="Wahlestedt C."/>
            <person name="Mattick J.S."/>
            <person name="Hume D.A."/>
            <person name="Kai C."/>
            <person name="Sasaki D."/>
            <person name="Tomaru Y."/>
            <person name="Fukuda S."/>
            <person name="Kanamori-Katayama M."/>
            <person name="Suzuki M."/>
            <person name="Aoki J."/>
            <person name="Arakawa T."/>
            <person name="Iida J."/>
            <person name="Imamura K."/>
            <person name="Itoh M."/>
            <person name="Kato T."/>
            <person name="Kawaji H."/>
            <person name="Kawagashira N."/>
            <person name="Kawashima T."/>
            <person name="Kojima M."/>
            <person name="Kondo S."/>
            <person name="Konno H."/>
            <person name="Nakano K."/>
            <person name="Ninomiya N."/>
            <person name="Nishio T."/>
            <person name="Okada M."/>
            <person name="Plessy C."/>
            <person name="Shibata K."/>
            <person name="Shiraki T."/>
            <person name="Suzuki S."/>
            <person name="Tagami M."/>
            <person name="Waki K."/>
            <person name="Watahiki A."/>
            <person name="Okamura-Oho Y."/>
            <person name="Suzuki H."/>
            <person name="Kawai J."/>
            <person name="Hayashizaki Y."/>
        </authorList>
    </citation>
    <scope>NUCLEOTIDE SEQUENCE [LARGE SCALE MRNA]</scope>
    <source>
        <strain>C57BL/6J</strain>
        <strain>NOD</strain>
        <tissue>Aorta</tissue>
        <tissue>Diencephalon</tissue>
        <tissue>Spleen</tissue>
        <tissue>Vein</tissue>
    </source>
</reference>
<reference key="2">
    <citation type="journal article" date="2004" name="Genome Res.">
        <title>The status, quality, and expansion of the NIH full-length cDNA project: the Mammalian Gene Collection (MGC).</title>
        <authorList>
            <consortium name="The MGC Project Team"/>
        </authorList>
    </citation>
    <scope>NUCLEOTIDE SEQUENCE [LARGE SCALE MRNA]</scope>
    <source>
        <strain>FVB/N</strain>
        <tissue>Kidney</tissue>
    </source>
</reference>
<gene>
    <name type="primary">Gucd1</name>
</gene>
<evidence type="ECO:0000305" key="1"/>